<dbReference type="EMBL" id="U21727">
    <property type="protein sequence ID" value="AAC46460.1"/>
    <property type="molecule type" value="Genomic_DNA"/>
</dbReference>
<dbReference type="STRING" id="1333848.CFNIH1_08390"/>
<dbReference type="GO" id="GO:0005886">
    <property type="term" value="C:plasma membrane"/>
    <property type="evidence" value="ECO:0007669"/>
    <property type="project" value="UniProtKB-SubCell"/>
</dbReference>
<dbReference type="GO" id="GO:0009636">
    <property type="term" value="P:response to toxic substance"/>
    <property type="evidence" value="ECO:0007669"/>
    <property type="project" value="InterPro"/>
</dbReference>
<dbReference type="InterPro" id="IPR012556">
    <property type="entry name" value="Entericidin"/>
</dbReference>
<dbReference type="NCBIfam" id="NF007319">
    <property type="entry name" value="PRK09810.1"/>
    <property type="match status" value="1"/>
</dbReference>
<dbReference type="Pfam" id="PF08085">
    <property type="entry name" value="Entericidin"/>
    <property type="match status" value="1"/>
</dbReference>
<dbReference type="PROSITE" id="PS51257">
    <property type="entry name" value="PROKAR_LIPOPROTEIN"/>
    <property type="match status" value="1"/>
</dbReference>
<feature type="signal peptide" evidence="1">
    <location>
        <begin position="1"/>
        <end position="21"/>
    </location>
</feature>
<feature type="peptide" id="PRO_0000018167" description="Entericidin A">
    <location>
        <begin position="22"/>
        <end position="44"/>
    </location>
</feature>
<feature type="lipid moiety-binding region" description="N-palmitoyl cysteine" evidence="2">
    <location>
        <position position="22"/>
    </location>
</feature>
<feature type="lipid moiety-binding region" description="S-diacylglycerol cysteine" evidence="2">
    <location>
        <position position="22"/>
    </location>
</feature>
<comment type="function">
    <text>Acts as antidote to the effect of entericidin B.</text>
</comment>
<comment type="subcellular location">
    <subcellularLocation>
        <location>Cell membrane</location>
        <topology>Lipid-anchor</topology>
    </subcellularLocation>
</comment>
<comment type="similarity">
    <text evidence="2">Belongs to the EcnA/EcnB lipoprotein family.</text>
</comment>
<protein>
    <recommendedName>
        <fullName>Entericidin A</fullName>
    </recommendedName>
</protein>
<organism>
    <name type="scientific">Citrobacter freundii</name>
    <dbReference type="NCBI Taxonomy" id="546"/>
    <lineage>
        <taxon>Bacteria</taxon>
        <taxon>Pseudomonadati</taxon>
        <taxon>Pseudomonadota</taxon>
        <taxon>Gammaproteobacteria</taxon>
        <taxon>Enterobacterales</taxon>
        <taxon>Enterobacteriaceae</taxon>
        <taxon>Citrobacter</taxon>
        <taxon>Citrobacter freundii complex</taxon>
    </lineage>
</organism>
<evidence type="ECO:0000255" key="1">
    <source>
        <dbReference type="PROSITE-ProRule" id="PRU00303"/>
    </source>
</evidence>
<evidence type="ECO:0000305" key="2"/>
<accession>P56551</accession>
<name>ECNA_CITFR</name>
<proteinExistence type="inferred from homology"/>
<gene>
    <name type="primary">ecnA</name>
</gene>
<reference key="1">
    <citation type="journal article" date="1998" name="J. Mol. Biol.">
        <title>The entericidin locus of Escherichia coli and its implications for programmed bacterial cell death.</title>
        <authorList>
            <person name="Bishop R.E."/>
            <person name="Leskiw B.K."/>
            <person name="Hodges R.S."/>
            <person name="Kay C.M."/>
            <person name="Weiner J.H."/>
        </authorList>
    </citation>
    <scope>NUCLEOTIDE SEQUENCE [GENOMIC DNA]</scope>
</reference>
<keyword id="KW-1003">Cell membrane</keyword>
<keyword id="KW-0449">Lipoprotein</keyword>
<keyword id="KW-0472">Membrane</keyword>
<keyword id="KW-0564">Palmitate</keyword>
<keyword id="KW-0732">Signal</keyword>
<sequence>MMKRLLGLVMLLLFTCTLLTGCNTARGFGEDIKHLGNSISHAAS</sequence>